<gene>
    <name evidence="15" type="primary">Amigo1</name>
    <name evidence="13" type="synonym">Ali2</name>
    <name evidence="8" type="synonym">Amigo</name>
    <name evidence="14" type="synonym">Kiaa1163</name>
</gene>
<reference evidence="10 12" key="1">
    <citation type="journal article" date="2003" name="J. Cell Biol.">
        <title>AMIGO, a transmembrane protein implicated in axon tract development, defines a novel protein family with leucine-rich repeats.</title>
        <authorList>
            <person name="Kuja-Panula J."/>
            <person name="Kiiltomaeki M."/>
            <person name="Yamashiro T."/>
            <person name="Rouhiainen A."/>
            <person name="Rauvala H."/>
        </authorList>
    </citation>
    <scope>NUCLEOTIDE SEQUENCE [MRNA] (ISOFORM 1)</scope>
    <scope>TISSUE SPECIFICITY</scope>
    <source>
        <strain evidence="12">C57BL/6J</strain>
        <tissue evidence="5">Brain</tissue>
    </source>
</reference>
<reference evidence="10 13" key="2">
    <citation type="submission" date="2004-03" db="EMBL/GenBank/DDBJ databases">
        <authorList>
            <person name="Ono T."/>
        </authorList>
    </citation>
    <scope>NUCLEOTIDE SEQUENCE [MRNA] (ISOFORM 1)</scope>
    <source>
        <tissue evidence="13">Brain</tissue>
    </source>
</reference>
<reference key="3">
    <citation type="journal article" date="2005" name="Science">
        <title>The transcriptional landscape of the mammalian genome.</title>
        <authorList>
            <person name="Carninci P."/>
            <person name="Kasukawa T."/>
            <person name="Katayama S."/>
            <person name="Gough J."/>
            <person name="Frith M.C."/>
            <person name="Maeda N."/>
            <person name="Oyama R."/>
            <person name="Ravasi T."/>
            <person name="Lenhard B."/>
            <person name="Wells C."/>
            <person name="Kodzius R."/>
            <person name="Shimokawa K."/>
            <person name="Bajic V.B."/>
            <person name="Brenner S.E."/>
            <person name="Batalov S."/>
            <person name="Forrest A.R."/>
            <person name="Zavolan M."/>
            <person name="Davis M.J."/>
            <person name="Wilming L.G."/>
            <person name="Aidinis V."/>
            <person name="Allen J.E."/>
            <person name="Ambesi-Impiombato A."/>
            <person name="Apweiler R."/>
            <person name="Aturaliya R.N."/>
            <person name="Bailey T.L."/>
            <person name="Bansal M."/>
            <person name="Baxter L."/>
            <person name="Beisel K.W."/>
            <person name="Bersano T."/>
            <person name="Bono H."/>
            <person name="Chalk A.M."/>
            <person name="Chiu K.P."/>
            <person name="Choudhary V."/>
            <person name="Christoffels A."/>
            <person name="Clutterbuck D.R."/>
            <person name="Crowe M.L."/>
            <person name="Dalla E."/>
            <person name="Dalrymple B.P."/>
            <person name="de Bono B."/>
            <person name="Della Gatta G."/>
            <person name="di Bernardo D."/>
            <person name="Down T."/>
            <person name="Engstrom P."/>
            <person name="Fagiolini M."/>
            <person name="Faulkner G."/>
            <person name="Fletcher C.F."/>
            <person name="Fukushima T."/>
            <person name="Furuno M."/>
            <person name="Futaki S."/>
            <person name="Gariboldi M."/>
            <person name="Georgii-Hemming P."/>
            <person name="Gingeras T.R."/>
            <person name="Gojobori T."/>
            <person name="Green R.E."/>
            <person name="Gustincich S."/>
            <person name="Harbers M."/>
            <person name="Hayashi Y."/>
            <person name="Hensch T.K."/>
            <person name="Hirokawa N."/>
            <person name="Hill D."/>
            <person name="Huminiecki L."/>
            <person name="Iacono M."/>
            <person name="Ikeo K."/>
            <person name="Iwama A."/>
            <person name="Ishikawa T."/>
            <person name="Jakt M."/>
            <person name="Kanapin A."/>
            <person name="Katoh M."/>
            <person name="Kawasawa Y."/>
            <person name="Kelso J."/>
            <person name="Kitamura H."/>
            <person name="Kitano H."/>
            <person name="Kollias G."/>
            <person name="Krishnan S.P."/>
            <person name="Kruger A."/>
            <person name="Kummerfeld S.K."/>
            <person name="Kurochkin I.V."/>
            <person name="Lareau L.F."/>
            <person name="Lazarevic D."/>
            <person name="Lipovich L."/>
            <person name="Liu J."/>
            <person name="Liuni S."/>
            <person name="McWilliam S."/>
            <person name="Madan Babu M."/>
            <person name="Madera M."/>
            <person name="Marchionni L."/>
            <person name="Matsuda H."/>
            <person name="Matsuzawa S."/>
            <person name="Miki H."/>
            <person name="Mignone F."/>
            <person name="Miyake S."/>
            <person name="Morris K."/>
            <person name="Mottagui-Tabar S."/>
            <person name="Mulder N."/>
            <person name="Nakano N."/>
            <person name="Nakauchi H."/>
            <person name="Ng P."/>
            <person name="Nilsson R."/>
            <person name="Nishiguchi S."/>
            <person name="Nishikawa S."/>
            <person name="Nori F."/>
            <person name="Ohara O."/>
            <person name="Okazaki Y."/>
            <person name="Orlando V."/>
            <person name="Pang K.C."/>
            <person name="Pavan W.J."/>
            <person name="Pavesi G."/>
            <person name="Pesole G."/>
            <person name="Petrovsky N."/>
            <person name="Piazza S."/>
            <person name="Reed J."/>
            <person name="Reid J.F."/>
            <person name="Ring B.Z."/>
            <person name="Ringwald M."/>
            <person name="Rost B."/>
            <person name="Ruan Y."/>
            <person name="Salzberg S.L."/>
            <person name="Sandelin A."/>
            <person name="Schneider C."/>
            <person name="Schoenbach C."/>
            <person name="Sekiguchi K."/>
            <person name="Semple C.A."/>
            <person name="Seno S."/>
            <person name="Sessa L."/>
            <person name="Sheng Y."/>
            <person name="Shibata Y."/>
            <person name="Shimada H."/>
            <person name="Shimada K."/>
            <person name="Silva D."/>
            <person name="Sinclair B."/>
            <person name="Sperling S."/>
            <person name="Stupka E."/>
            <person name="Sugiura K."/>
            <person name="Sultana R."/>
            <person name="Takenaka Y."/>
            <person name="Taki K."/>
            <person name="Tammoja K."/>
            <person name="Tan S.L."/>
            <person name="Tang S."/>
            <person name="Taylor M.S."/>
            <person name="Tegner J."/>
            <person name="Teichmann S.A."/>
            <person name="Ueda H.R."/>
            <person name="van Nimwegen E."/>
            <person name="Verardo R."/>
            <person name="Wei C.L."/>
            <person name="Yagi K."/>
            <person name="Yamanishi H."/>
            <person name="Zabarovsky E."/>
            <person name="Zhu S."/>
            <person name="Zimmer A."/>
            <person name="Hide W."/>
            <person name="Bult C."/>
            <person name="Grimmond S.M."/>
            <person name="Teasdale R.D."/>
            <person name="Liu E.T."/>
            <person name="Brusic V."/>
            <person name="Quackenbush J."/>
            <person name="Wahlestedt C."/>
            <person name="Mattick J.S."/>
            <person name="Hume D.A."/>
            <person name="Kai C."/>
            <person name="Sasaki D."/>
            <person name="Tomaru Y."/>
            <person name="Fukuda S."/>
            <person name="Kanamori-Katayama M."/>
            <person name="Suzuki M."/>
            <person name="Aoki J."/>
            <person name="Arakawa T."/>
            <person name="Iida J."/>
            <person name="Imamura K."/>
            <person name="Itoh M."/>
            <person name="Kato T."/>
            <person name="Kawaji H."/>
            <person name="Kawagashira N."/>
            <person name="Kawashima T."/>
            <person name="Kojima M."/>
            <person name="Kondo S."/>
            <person name="Konno H."/>
            <person name="Nakano K."/>
            <person name="Ninomiya N."/>
            <person name="Nishio T."/>
            <person name="Okada M."/>
            <person name="Plessy C."/>
            <person name="Shibata K."/>
            <person name="Shiraki T."/>
            <person name="Suzuki S."/>
            <person name="Tagami M."/>
            <person name="Waki K."/>
            <person name="Watahiki A."/>
            <person name="Okamura-Oho Y."/>
            <person name="Suzuki H."/>
            <person name="Kawai J."/>
            <person name="Hayashizaki Y."/>
        </authorList>
    </citation>
    <scope>NUCLEOTIDE SEQUENCE [LARGE SCALE MRNA] (ISOFORM 1)</scope>
    <source>
        <strain>C57BL/6J</strain>
        <tissue>Cerebellum</tissue>
    </source>
</reference>
<reference evidence="10 14" key="4">
    <citation type="journal article" date="2004" name="DNA Res.">
        <title>Prediction of the coding sequences of mouse homologues of KIAA gene: IV. The complete nucleotide sequences of 500 mouse KIAA-homologous cDNAs identified by screening of terminal sequences of cDNA clones randomly sampled from size-fractionated libraries.</title>
        <authorList>
            <person name="Okazaki N."/>
            <person name="Kikuno R."/>
            <person name="Ohara R."/>
            <person name="Inamoto S."/>
            <person name="Koseki H."/>
            <person name="Hiraoka S."/>
            <person name="Saga Y."/>
            <person name="Seino S."/>
            <person name="Nishimura M."/>
            <person name="Kaisho T."/>
            <person name="Hoshino K."/>
            <person name="Kitamura H."/>
            <person name="Nagase T."/>
            <person name="Ohara O."/>
            <person name="Koga H."/>
        </authorList>
    </citation>
    <scope>NUCLEOTIDE SEQUENCE [LARGE SCALE MRNA] (ISOFORM 1)</scope>
    <source>
        <tissue evidence="14">Fetal brain</tissue>
    </source>
</reference>
<reference key="5">
    <citation type="journal article" date="2009" name="PLoS Biol.">
        <title>Lineage-specific biology revealed by a finished genome assembly of the mouse.</title>
        <authorList>
            <person name="Church D.M."/>
            <person name="Goodstadt L."/>
            <person name="Hillier L.W."/>
            <person name="Zody M.C."/>
            <person name="Goldstein S."/>
            <person name="She X."/>
            <person name="Bult C.J."/>
            <person name="Agarwala R."/>
            <person name="Cherry J.L."/>
            <person name="DiCuccio M."/>
            <person name="Hlavina W."/>
            <person name="Kapustin Y."/>
            <person name="Meric P."/>
            <person name="Maglott D."/>
            <person name="Birtle Z."/>
            <person name="Marques A.C."/>
            <person name="Graves T."/>
            <person name="Zhou S."/>
            <person name="Teague B."/>
            <person name="Potamousis K."/>
            <person name="Churas C."/>
            <person name="Place M."/>
            <person name="Herschleb J."/>
            <person name="Runnheim R."/>
            <person name="Forrest D."/>
            <person name="Amos-Landgraf J."/>
            <person name="Schwartz D.C."/>
            <person name="Cheng Z."/>
            <person name="Lindblad-Toh K."/>
            <person name="Eichler E.E."/>
            <person name="Ponting C.P."/>
        </authorList>
    </citation>
    <scope>NUCLEOTIDE SEQUENCE [LARGE SCALE GENOMIC DNA]</scope>
    <source>
        <strain>C57BL/6J</strain>
    </source>
</reference>
<reference evidence="10 11" key="6">
    <citation type="journal article" date="2004" name="Genome Res.">
        <title>The status, quality, and expansion of the NIH full-length cDNA project: the Mammalian Gene Collection (MGC).</title>
        <authorList>
            <consortium name="The MGC Project Team"/>
        </authorList>
    </citation>
    <scope>NUCLEOTIDE SEQUENCE [LARGE SCALE MRNA] (ISOFORMS 1 AND 2)</scope>
    <source>
        <strain evidence="11">FVB/N</strain>
        <tissue evidence="11">Mammary gland</tissue>
    </source>
</reference>
<reference key="7">
    <citation type="journal article" date="2010" name="Cell">
        <title>A tissue-specific atlas of mouse protein phosphorylation and expression.</title>
        <authorList>
            <person name="Huttlin E.L."/>
            <person name="Jedrychowski M.P."/>
            <person name="Elias J.E."/>
            <person name="Goswami T."/>
            <person name="Rad R."/>
            <person name="Beausoleil S.A."/>
            <person name="Villen J."/>
            <person name="Haas W."/>
            <person name="Sowa M.E."/>
            <person name="Gygi S.P."/>
        </authorList>
    </citation>
    <scope>PHOSPHORYLATION [LARGE SCALE ANALYSIS] AT SER-476 AND SER-480</scope>
    <scope>IDENTIFICATION BY MASS SPECTROMETRY [LARGE SCALE ANALYSIS]</scope>
    <source>
        <tissue>Brain</tissue>
        <tissue>Brown adipose tissue</tissue>
        <tissue>Heart</tissue>
        <tissue>Kidney</tissue>
        <tissue>Lung</tissue>
    </source>
</reference>
<reference key="8">
    <citation type="journal article" date="2011" name="EMBO Rep.">
        <title>AMIGO is an auxiliary subunit of the Kv2.1 potassium channel.</title>
        <authorList>
            <person name="Peltola M.A."/>
            <person name="Kuja-Panula J."/>
            <person name="Lauri S.E."/>
            <person name="Taira T."/>
            <person name="Rauvala H."/>
        </authorList>
    </citation>
    <scope>FUNCTION</scope>
    <scope>INTERACTION WITH KCNB1</scope>
    <scope>SUBCELLULAR LOCATION</scope>
    <scope>TISSUE SPECIFICITY</scope>
</reference>
<reference key="9">
    <citation type="journal article" date="2011" name="J. Mol. Biol.">
        <title>Crystal structure and role of glycans and dimerization in folding of neuronal leucine-rich repeat protein AMIGO-1.</title>
        <authorList>
            <person name="Kajander T."/>
            <person name="Kuja-Panula J."/>
            <person name="Rauvala H."/>
            <person name="Goldman A."/>
        </authorList>
    </citation>
    <scope>X-RAY CRYSTALLOGRAPHY (2.0 ANGSTROMS) OF 28-370</scope>
    <scope>DISULFIDE BONDS</scope>
    <scope>LEUCINE-RICH REPEATS</scope>
    <scope>SUBUNIT</scope>
    <scope>GLYCOSYLATION AT ASN-72; ASN-269; ASN-315; ASN-348 AND ASN-359</scope>
    <scope>MUTAGENESIS OF ASN-348</scope>
    <scope>SUBCELLULAR LOCATION</scope>
</reference>
<proteinExistence type="evidence at protein level"/>
<protein>
    <recommendedName>
        <fullName>Amphoterin-induced protein 1</fullName>
    </recommendedName>
    <alternativeName>
        <fullName>AMIGO-1</fullName>
    </alternativeName>
    <alternativeName>
        <fullName>Alivin-2</fullName>
    </alternativeName>
</protein>
<accession>Q80ZD8</accession>
<accession>A2AE40</accession>
<accession>Q69ZQ0</accession>
<accession>Q8R5D4</accession>
<accession>Q921U9</accession>
<dbReference type="EMBL" id="AY237008">
    <property type="protein sequence ID" value="AAO48949.1"/>
    <property type="molecule type" value="mRNA"/>
</dbReference>
<dbReference type="EMBL" id="AB167509">
    <property type="protein sequence ID" value="BAD12541.1"/>
    <property type="molecule type" value="mRNA"/>
</dbReference>
<dbReference type="EMBL" id="AK035960">
    <property type="protein sequence ID" value="BAC29259.1"/>
    <property type="molecule type" value="mRNA"/>
</dbReference>
<dbReference type="EMBL" id="AK173118">
    <property type="protein sequence ID" value="BAD32396.1"/>
    <property type="status" value="ALT_INIT"/>
    <property type="molecule type" value="mRNA"/>
</dbReference>
<dbReference type="EMBL" id="AL671854">
    <property type="status" value="NOT_ANNOTATED_CDS"/>
    <property type="molecule type" value="Genomic_DNA"/>
</dbReference>
<dbReference type="EMBL" id="BC010598">
    <property type="protein sequence ID" value="AAH10598.2"/>
    <property type="molecule type" value="mRNA"/>
</dbReference>
<dbReference type="EMBL" id="BC022907">
    <property type="protein sequence ID" value="AAH22907.1"/>
    <property type="status" value="ALT_FRAME"/>
    <property type="molecule type" value="mRNA"/>
</dbReference>
<dbReference type="CCDS" id="CCDS17753.1">
    <molecule id="Q80ZD8-1"/>
</dbReference>
<dbReference type="CCDS" id="CCDS71305.1">
    <molecule id="Q80ZD8-2"/>
</dbReference>
<dbReference type="RefSeq" id="NP_001004293.1">
    <molecule id="Q80ZD8-1"/>
    <property type="nucleotide sequence ID" value="NM_001004293.3"/>
</dbReference>
<dbReference type="RefSeq" id="NP_001274022.1">
    <molecule id="Q80ZD8-2"/>
    <property type="nucleotide sequence ID" value="NM_001287093.2"/>
</dbReference>
<dbReference type="RefSeq" id="NP_001398489.1">
    <molecule id="Q80ZD8-1"/>
    <property type="nucleotide sequence ID" value="NM_001411560.1"/>
</dbReference>
<dbReference type="RefSeq" id="NP_001398490.1">
    <molecule id="Q80ZD8-1"/>
    <property type="nucleotide sequence ID" value="NM_001411561.1"/>
</dbReference>
<dbReference type="RefSeq" id="NP_666249.2">
    <molecule id="Q80ZD8-1"/>
    <property type="nucleotide sequence ID" value="NM_146137.3"/>
</dbReference>
<dbReference type="RefSeq" id="XP_036018969.1">
    <molecule id="Q80ZD8-2"/>
    <property type="nucleotide sequence ID" value="XM_036163076.1"/>
</dbReference>
<dbReference type="PDB" id="2XOT">
    <property type="method" value="X-ray"/>
    <property type="resolution" value="2.00 A"/>
    <property type="chains" value="A/B=28-370"/>
</dbReference>
<dbReference type="PDBsum" id="2XOT"/>
<dbReference type="SMR" id="Q80ZD8"/>
<dbReference type="BioGRID" id="230893">
    <property type="interactions" value="5"/>
</dbReference>
<dbReference type="FunCoup" id="Q80ZD8">
    <property type="interactions" value="309"/>
</dbReference>
<dbReference type="IntAct" id="Q80ZD8">
    <property type="interactions" value="1"/>
</dbReference>
<dbReference type="MINT" id="Q80ZD8"/>
<dbReference type="STRING" id="10090.ENSMUSP00000102267"/>
<dbReference type="GlyConnect" id="2127">
    <property type="glycosylation" value="1 N-Linked glycan (1 site)"/>
</dbReference>
<dbReference type="GlyCosmos" id="Q80ZD8">
    <property type="glycosylation" value="5 sites, 1 glycan"/>
</dbReference>
<dbReference type="GlyGen" id="Q80ZD8">
    <property type="glycosylation" value="5 sites, 3 N-linked glycans (2 sites)"/>
</dbReference>
<dbReference type="iPTMnet" id="Q80ZD8"/>
<dbReference type="PhosphoSitePlus" id="Q80ZD8"/>
<dbReference type="SwissPalm" id="Q80ZD8"/>
<dbReference type="PaxDb" id="10090-ENSMUSP00000102267"/>
<dbReference type="PeptideAtlas" id="Q80ZD8"/>
<dbReference type="ProteomicsDB" id="296201">
    <molecule id="Q80ZD8-1"/>
</dbReference>
<dbReference type="ProteomicsDB" id="296202">
    <molecule id="Q80ZD8-2"/>
</dbReference>
<dbReference type="ABCD" id="Q80ZD8">
    <property type="antibodies" value="6 sequenced antibodies"/>
</dbReference>
<dbReference type="Antibodypedia" id="53745">
    <property type="antibodies" value="326 antibodies from 35 providers"/>
</dbReference>
<dbReference type="DNASU" id="229715"/>
<dbReference type="Ensembl" id="ENSMUST00000050909.7">
    <molecule id="Q80ZD8-1"/>
    <property type="protein sequence ID" value="ENSMUSP00000061244.7"/>
    <property type="gene ID" value="ENSMUSG00000050947.10"/>
</dbReference>
<dbReference type="Ensembl" id="ENSMUST00000106656.2">
    <molecule id="Q80ZD8-1"/>
    <property type="protein sequence ID" value="ENSMUSP00000102267.2"/>
    <property type="gene ID" value="ENSMUSG00000050947.10"/>
</dbReference>
<dbReference type="Ensembl" id="ENSMUST00000106659.3">
    <molecule id="Q80ZD8-2"/>
    <property type="protein sequence ID" value="ENSMUSP00000102270.3"/>
    <property type="gene ID" value="ENSMUSG00000050947.10"/>
</dbReference>
<dbReference type="GeneID" id="229715"/>
<dbReference type="KEGG" id="mmu:229715"/>
<dbReference type="UCSC" id="uc008qyg.2">
    <molecule id="Q80ZD8-1"/>
    <property type="organism name" value="mouse"/>
</dbReference>
<dbReference type="UCSC" id="uc033hze.1">
    <molecule id="Q80ZD8-2"/>
    <property type="organism name" value="mouse"/>
</dbReference>
<dbReference type="AGR" id="MGI:2653612"/>
<dbReference type="CTD" id="57463"/>
<dbReference type="MGI" id="MGI:2653612">
    <property type="gene designation" value="Amigo1"/>
</dbReference>
<dbReference type="VEuPathDB" id="HostDB:ENSMUSG00000050947"/>
<dbReference type="eggNOG" id="ENOG502QVUQ">
    <property type="taxonomic scope" value="Eukaryota"/>
</dbReference>
<dbReference type="GeneTree" id="ENSGT00950000183146"/>
<dbReference type="HOGENOM" id="CLU_030478_0_0_1"/>
<dbReference type="InParanoid" id="Q80ZD8"/>
<dbReference type="OMA" id="YSCWVAG"/>
<dbReference type="OrthoDB" id="676979at2759"/>
<dbReference type="TreeFam" id="TF326838"/>
<dbReference type="BioGRID-ORCS" id="229715">
    <property type="hits" value="2 hits in 77 CRISPR screens"/>
</dbReference>
<dbReference type="EvolutionaryTrace" id="Q80ZD8"/>
<dbReference type="PRO" id="PR:Q80ZD8"/>
<dbReference type="Proteomes" id="UP000000589">
    <property type="component" value="Chromosome 3"/>
</dbReference>
<dbReference type="RNAct" id="Q80ZD8">
    <property type="molecule type" value="protein"/>
</dbReference>
<dbReference type="Bgee" id="ENSMUSG00000050947">
    <property type="expression patterns" value="Expressed in dentate gyrus of hippocampal formation granule cell and 147 other cell types or tissues"/>
</dbReference>
<dbReference type="ExpressionAtlas" id="Q80ZD8">
    <property type="expression patterns" value="baseline and differential"/>
</dbReference>
<dbReference type="GO" id="GO:0030425">
    <property type="term" value="C:dendrite"/>
    <property type="evidence" value="ECO:0000314"/>
    <property type="project" value="UniProtKB"/>
</dbReference>
<dbReference type="GO" id="GO:0016020">
    <property type="term" value="C:membrane"/>
    <property type="evidence" value="ECO:0000266"/>
    <property type="project" value="MGI"/>
</dbReference>
<dbReference type="GO" id="GO:0032809">
    <property type="term" value="C:neuronal cell body membrane"/>
    <property type="evidence" value="ECO:0000314"/>
    <property type="project" value="UniProtKB"/>
</dbReference>
<dbReference type="GO" id="GO:1990030">
    <property type="term" value="C:pericellular basket"/>
    <property type="evidence" value="ECO:0007669"/>
    <property type="project" value="Ensembl"/>
</dbReference>
<dbReference type="GO" id="GO:0043204">
    <property type="term" value="C:perikaryon"/>
    <property type="evidence" value="ECO:0007669"/>
    <property type="project" value="UniProtKB-SubCell"/>
</dbReference>
<dbReference type="GO" id="GO:0015459">
    <property type="term" value="F:potassium channel regulator activity"/>
    <property type="evidence" value="ECO:0000314"/>
    <property type="project" value="UniProtKB"/>
</dbReference>
<dbReference type="GO" id="GO:0007413">
    <property type="term" value="P:axonal fasciculation"/>
    <property type="evidence" value="ECO:0000250"/>
    <property type="project" value="UniProtKB"/>
</dbReference>
<dbReference type="GO" id="GO:0007409">
    <property type="term" value="P:axonogenesis"/>
    <property type="evidence" value="ECO:0000266"/>
    <property type="project" value="MGI"/>
</dbReference>
<dbReference type="GO" id="GO:0007155">
    <property type="term" value="P:cell adhesion"/>
    <property type="evidence" value="ECO:0000266"/>
    <property type="project" value="MGI"/>
</dbReference>
<dbReference type="GO" id="GO:1905232">
    <property type="term" value="P:cellular response to L-glutamate"/>
    <property type="evidence" value="ECO:0007669"/>
    <property type="project" value="Ensembl"/>
</dbReference>
<dbReference type="GO" id="GO:0007157">
    <property type="term" value="P:heterophilic cell-cell adhesion via plasma membrane cell adhesion molecules"/>
    <property type="evidence" value="ECO:0000250"/>
    <property type="project" value="UniProtKB"/>
</dbReference>
<dbReference type="GO" id="GO:0007156">
    <property type="term" value="P:homophilic cell adhesion via plasma membrane adhesion molecules"/>
    <property type="evidence" value="ECO:0000250"/>
    <property type="project" value="UniProtKB"/>
</dbReference>
<dbReference type="GO" id="GO:0042552">
    <property type="term" value="P:myelination"/>
    <property type="evidence" value="ECO:0000250"/>
    <property type="project" value="UniProtKB"/>
</dbReference>
<dbReference type="GO" id="GO:0050772">
    <property type="term" value="P:positive regulation of axonogenesis"/>
    <property type="evidence" value="ECO:0000250"/>
    <property type="project" value="UniProtKB"/>
</dbReference>
<dbReference type="GO" id="GO:0010976">
    <property type="term" value="P:positive regulation of neuron projection development"/>
    <property type="evidence" value="ECO:0007669"/>
    <property type="project" value="Ensembl"/>
</dbReference>
<dbReference type="GO" id="GO:1901381">
    <property type="term" value="P:positive regulation of potassium ion transmembrane transport"/>
    <property type="evidence" value="ECO:0000314"/>
    <property type="project" value="UniProtKB"/>
</dbReference>
<dbReference type="GO" id="GO:0051965">
    <property type="term" value="P:positive regulation of synapse assembly"/>
    <property type="evidence" value="ECO:0000314"/>
    <property type="project" value="MGI"/>
</dbReference>
<dbReference type="FunFam" id="3.80.10.10:FF:000181">
    <property type="entry name" value="amphoterin-induced protein 1 isoform X1"/>
    <property type="match status" value="1"/>
</dbReference>
<dbReference type="FunFam" id="2.60.40.10:FF:001123">
    <property type="entry name" value="Amphoterin-induced protein 1 isoform X2"/>
    <property type="match status" value="1"/>
</dbReference>
<dbReference type="Gene3D" id="2.60.40.10">
    <property type="entry name" value="Immunoglobulins"/>
    <property type="match status" value="1"/>
</dbReference>
<dbReference type="Gene3D" id="3.80.10.10">
    <property type="entry name" value="Ribonuclease Inhibitor"/>
    <property type="match status" value="1"/>
</dbReference>
<dbReference type="InterPro" id="IPR031283">
    <property type="entry name" value="AMIGO"/>
</dbReference>
<dbReference type="InterPro" id="IPR000483">
    <property type="entry name" value="Cys-rich_flank_reg_C"/>
</dbReference>
<dbReference type="InterPro" id="IPR007110">
    <property type="entry name" value="Ig-like_dom"/>
</dbReference>
<dbReference type="InterPro" id="IPR036179">
    <property type="entry name" value="Ig-like_dom_sf"/>
</dbReference>
<dbReference type="InterPro" id="IPR013783">
    <property type="entry name" value="Ig-like_fold"/>
</dbReference>
<dbReference type="InterPro" id="IPR013098">
    <property type="entry name" value="Ig_I-set"/>
</dbReference>
<dbReference type="InterPro" id="IPR003599">
    <property type="entry name" value="Ig_sub"/>
</dbReference>
<dbReference type="InterPro" id="IPR003598">
    <property type="entry name" value="Ig_sub2"/>
</dbReference>
<dbReference type="InterPro" id="IPR001611">
    <property type="entry name" value="Leu-rich_rpt"/>
</dbReference>
<dbReference type="InterPro" id="IPR003591">
    <property type="entry name" value="Leu-rich_rpt_typical-subtyp"/>
</dbReference>
<dbReference type="InterPro" id="IPR032675">
    <property type="entry name" value="LRR_dom_sf"/>
</dbReference>
<dbReference type="PANTHER" id="PTHR24368">
    <property type="entry name" value="AMPHOTERIN-INDUCED PROTEIN"/>
    <property type="match status" value="1"/>
</dbReference>
<dbReference type="PANTHER" id="PTHR24368:SF1">
    <property type="entry name" value="AMPHOTERIN-INDUCED PROTEIN 1"/>
    <property type="match status" value="1"/>
</dbReference>
<dbReference type="Pfam" id="PF07679">
    <property type="entry name" value="I-set"/>
    <property type="match status" value="1"/>
</dbReference>
<dbReference type="Pfam" id="PF13855">
    <property type="entry name" value="LRR_8"/>
    <property type="match status" value="1"/>
</dbReference>
<dbReference type="PRINTS" id="PR00019">
    <property type="entry name" value="LEURICHRPT"/>
</dbReference>
<dbReference type="SMART" id="SM00409">
    <property type="entry name" value="IG"/>
    <property type="match status" value="1"/>
</dbReference>
<dbReference type="SMART" id="SM00408">
    <property type="entry name" value="IGc2"/>
    <property type="match status" value="1"/>
</dbReference>
<dbReference type="SMART" id="SM00369">
    <property type="entry name" value="LRR_TYP"/>
    <property type="match status" value="5"/>
</dbReference>
<dbReference type="SMART" id="SM00082">
    <property type="entry name" value="LRRCT"/>
    <property type="match status" value="1"/>
</dbReference>
<dbReference type="SUPFAM" id="SSF48726">
    <property type="entry name" value="Immunoglobulin"/>
    <property type="match status" value="1"/>
</dbReference>
<dbReference type="SUPFAM" id="SSF52058">
    <property type="entry name" value="L domain-like"/>
    <property type="match status" value="1"/>
</dbReference>
<dbReference type="PROSITE" id="PS50835">
    <property type="entry name" value="IG_LIKE"/>
    <property type="match status" value="1"/>
</dbReference>
<dbReference type="PROSITE" id="PS51450">
    <property type="entry name" value="LRR"/>
    <property type="match status" value="6"/>
</dbReference>
<sequence>MQPQRDLRGLWLLLLSVFLLLFEVARAGRSVVSCPANCLCASNILSCSKQQLPNVPQSLPSYTALLDLSHNNLSRLRAEWTPTRLTNLHSLLLSHNHLNFISSEAFVPVPNLRYLDLSSNHLHTLDEFLFSDLQALEVLLLYNNHIVVVDRNAFEDMAQLQKLYLSQNQISRFPVELIKDGNKLPKLMLLDLSSNKLKKLPLTDLQKLPAWVKNGLYLHNNPLECDCKLYQLFSHWQYRQLSSVMDFQEDLYCMHSKKLHNIFSLDFFNCSEYKESAWEAHLGDTLTIRCDTKQQGMTKVWVSPSNEQVLSQGSNGSVSVRNGDLFFKKVQVEDGGVYTCYAMGETFNETLSVELKVYNFTLHGHHDTLNTAYTTLVGCILSVVLVLIYLYLTPCRCWCRGVEKPSSHQGDSLSSSMLSTTPNHDPMAGGDKDDGFDRRVAFLEPAGPGQGQNGKLKPGNTLPVPEATGKGQRRMSDPESVSSVFSDTPIVV</sequence>
<comment type="function">
    <text evidence="1 7">Promotes growth and fasciculation of neurites from cultured hippocampal neurons. May be involved in fasciculation as well as myelination of developing neural axons. May have a role in regeneration as well as neural plasticity in the adult nervous system. May mediate homophilic as well as heterophilic cell-cell interaction and contribute to signal transduction through its intracellular domain (By similarity). Assembled with KCNB1 modulates the gating characteristics of the delayed rectifier voltage-dependent potassium channel KCNB1 (PubMed:22056818).</text>
</comment>
<comment type="subunit">
    <text evidence="6 7">Homodimer, and heterodimer with AMIGO2 and AMIGO3 (PubMed:21983541). Interacts with KCNB1 (PubMed:22056818).</text>
</comment>
<comment type="interaction">
    <interactant intactId="EBI-7511393">
        <id>Q80ZD8</id>
    </interactant>
    <interactant intactId="EBI-7511364">
        <id>Q03717</id>
        <label>Kcnb1</label>
    </interactant>
    <organismsDiffer>false</organismsDiffer>
    <experiments>4</experiments>
</comment>
<comment type="subcellular location">
    <subcellularLocation>
        <location evidence="6 7">Cell membrane</location>
        <topology evidence="6">Single-pass type I membrane protein</topology>
    </subcellularLocation>
    <subcellularLocation>
        <location evidence="7">Perikaryon</location>
    </subcellularLocation>
    <subcellularLocation>
        <location evidence="7">Cell projection</location>
        <location evidence="7">Dendrite</location>
    </subcellularLocation>
    <text evidence="1 7">Colocalizes with KCNB1 at high-density somatodendritic clusters on the surface of hippocampal and cortical neurons (PubMed:22056818). Associated with axons of neuronal cells (By similarity).</text>
</comment>
<comment type="alternative products">
    <event type="alternative splicing"/>
    <isoform>
        <id>Q80ZD8-1</id>
        <name evidence="5">1</name>
        <sequence type="displayed"/>
    </isoform>
    <isoform>
        <id>Q80ZD8-2</id>
        <name evidence="10">2</name>
        <sequence type="described" ref="VSP_014166 VSP_014167"/>
    </isoform>
</comment>
<comment type="tissue specificity">
    <text evidence="5 7">Expressed in hippocampal and cortical neurons (at protein level) (PubMed:22056818). High levels in cerebellum, cerebrum, and retina. Low levels in liver, kidney, small intestine, spleen, lung and heart.</text>
</comment>
<comment type="domain">
    <text>The LRR repeat region mediates homodimerization.</text>
</comment>
<comment type="similarity">
    <text evidence="10">Belongs to the immunoglobulin superfamily. AMIGO family.</text>
</comment>
<comment type="sequence caution" evidence="10">
    <conflict type="frameshift">
        <sequence resource="EMBL-CDS" id="AAH22907"/>
    </conflict>
</comment>
<comment type="sequence caution" evidence="10">
    <conflict type="erroneous initiation">
        <sequence resource="EMBL-CDS" id="BAD32396"/>
    </conflict>
</comment>
<feature type="signal peptide" evidence="2">
    <location>
        <begin position="1"/>
        <end position="27"/>
    </location>
</feature>
<feature type="chain" id="PRO_0000014507" description="Amphoterin-induced protein 1" evidence="2">
    <location>
        <begin position="28"/>
        <end position="492"/>
    </location>
</feature>
<feature type="topological domain" description="Extracellular" evidence="2">
    <location>
        <begin position="28"/>
        <end position="371"/>
    </location>
</feature>
<feature type="transmembrane region" description="Helical" evidence="2">
    <location>
        <begin position="372"/>
        <end position="392"/>
    </location>
</feature>
<feature type="topological domain" description="Cytoplasmic" evidence="2">
    <location>
        <begin position="393"/>
        <end position="492"/>
    </location>
</feature>
<feature type="domain" description="LRRNT">
    <location>
        <begin position="28"/>
        <end position="61"/>
    </location>
</feature>
<feature type="repeat" description="LRR 1" evidence="6">
    <location>
        <begin position="62"/>
        <end position="83"/>
    </location>
</feature>
<feature type="repeat" description="LRR 2" evidence="6">
    <location>
        <begin position="87"/>
        <end position="108"/>
    </location>
</feature>
<feature type="repeat" description="LRR 3" evidence="6">
    <location>
        <begin position="111"/>
        <end position="132"/>
    </location>
</feature>
<feature type="repeat" description="LRR 4" evidence="6">
    <location>
        <begin position="135"/>
        <end position="156"/>
    </location>
</feature>
<feature type="repeat" description="LRR 5" evidence="6">
    <location>
        <begin position="159"/>
        <end position="180"/>
    </location>
</feature>
<feature type="repeat" description="LRR 6" evidence="6">
    <location>
        <begin position="186"/>
        <end position="206"/>
    </location>
</feature>
<feature type="domain" description="LRRCT">
    <location>
        <begin position="208"/>
        <end position="272"/>
    </location>
</feature>
<feature type="domain" description="Ig-like C2-type" evidence="2">
    <location>
        <begin position="269"/>
        <end position="352"/>
    </location>
</feature>
<feature type="region of interest" description="Disordered" evidence="4">
    <location>
        <begin position="404"/>
        <end position="492"/>
    </location>
</feature>
<feature type="compositionally biased region" description="Polar residues" evidence="4">
    <location>
        <begin position="407"/>
        <end position="423"/>
    </location>
</feature>
<feature type="compositionally biased region" description="Basic and acidic residues" evidence="4">
    <location>
        <begin position="430"/>
        <end position="441"/>
    </location>
</feature>
<feature type="modified residue" description="Phosphoserine" evidence="16">
    <location>
        <position position="476"/>
    </location>
</feature>
<feature type="modified residue" description="Phosphoserine" evidence="16">
    <location>
        <position position="480"/>
    </location>
</feature>
<feature type="glycosylation site" description="N-linked (GlcNAc...) asparagine" evidence="6">
    <location>
        <position position="72"/>
    </location>
</feature>
<feature type="glycosylation site" description="N-linked (GlcNAc...) asparagine" evidence="6">
    <location>
        <position position="269"/>
    </location>
</feature>
<feature type="glycosylation site" description="N-linked (GlcNAc...) asparagine" evidence="6">
    <location>
        <position position="315"/>
    </location>
</feature>
<feature type="glycosylation site" description="N-linked (GlcNAc...) asparagine" evidence="6">
    <location>
        <position position="348"/>
    </location>
</feature>
<feature type="glycosylation site" description="N-linked (GlcNAc...) asparagine" evidence="6">
    <location>
        <position position="359"/>
    </location>
</feature>
<feature type="disulfide bond" evidence="3 6">
    <location>
        <begin position="34"/>
        <end position="40"/>
    </location>
</feature>
<feature type="disulfide bond" evidence="3 6">
    <location>
        <begin position="38"/>
        <end position="47"/>
    </location>
</feature>
<feature type="disulfide bond" evidence="3 6">
    <location>
        <begin position="225"/>
        <end position="253"/>
    </location>
</feature>
<feature type="disulfide bond" evidence="3 6">
    <location>
        <begin position="227"/>
        <end position="270"/>
    </location>
</feature>
<feature type="disulfide bond" evidence="3 6">
    <location>
        <begin position="290"/>
        <end position="340"/>
    </location>
</feature>
<feature type="splice variant" id="VSP_014166" description="In isoform 2." evidence="9">
    <original>CDTKQQGMTKVWVSPSNEQV</original>
    <variation>TLPPTVYTRLANLRAHGLYN</variation>
    <location>
        <begin position="290"/>
        <end position="309"/>
    </location>
</feature>
<feature type="splice variant" id="VSP_014167" description="In isoform 2." evidence="9">
    <location>
        <begin position="310"/>
        <end position="492"/>
    </location>
</feature>
<feature type="mutagenesis site" description="Prevents from leaving the ER." evidence="6">
    <original>N</original>
    <variation>A</variation>
    <location>
        <position position="348"/>
    </location>
</feature>
<feature type="strand" evidence="17">
    <location>
        <begin position="39"/>
        <end position="41"/>
    </location>
</feature>
<feature type="strand" evidence="17">
    <location>
        <begin position="44"/>
        <end position="46"/>
    </location>
</feature>
<feature type="strand" evidence="17">
    <location>
        <begin position="64"/>
        <end position="67"/>
    </location>
</feature>
<feature type="strand" evidence="17">
    <location>
        <begin position="80"/>
        <end position="83"/>
    </location>
</feature>
<feature type="strand" evidence="17">
    <location>
        <begin position="90"/>
        <end position="92"/>
    </location>
</feature>
<feature type="turn" evidence="17">
    <location>
        <begin position="103"/>
        <end position="108"/>
    </location>
</feature>
<feature type="strand" evidence="17">
    <location>
        <begin position="114"/>
        <end position="116"/>
    </location>
</feature>
<feature type="turn" evidence="17">
    <location>
        <begin position="127"/>
        <end position="132"/>
    </location>
</feature>
<feature type="strand" evidence="17">
    <location>
        <begin position="138"/>
        <end position="140"/>
    </location>
</feature>
<feature type="turn" evidence="17">
    <location>
        <begin position="151"/>
        <end position="156"/>
    </location>
</feature>
<feature type="strand" evidence="17">
    <location>
        <begin position="162"/>
        <end position="164"/>
    </location>
</feature>
<feature type="helix" evidence="17">
    <location>
        <begin position="175"/>
        <end position="177"/>
    </location>
</feature>
<feature type="strand" evidence="17">
    <location>
        <begin position="189"/>
        <end position="191"/>
    </location>
</feature>
<feature type="helix" evidence="17">
    <location>
        <begin position="202"/>
        <end position="207"/>
    </location>
</feature>
<feature type="helix" evidence="17">
    <location>
        <begin position="210"/>
        <end position="213"/>
    </location>
</feature>
<feature type="helix" evidence="17">
    <location>
        <begin position="227"/>
        <end position="238"/>
    </location>
</feature>
<feature type="helix" evidence="17">
    <location>
        <begin position="242"/>
        <end position="245"/>
    </location>
</feature>
<feature type="helix" evidence="17">
    <location>
        <begin position="248"/>
        <end position="250"/>
    </location>
</feature>
<feature type="strand" evidence="17">
    <location>
        <begin position="252"/>
        <end position="257"/>
    </location>
</feature>
<feature type="helix" evidence="17">
    <location>
        <begin position="262"/>
        <end position="264"/>
    </location>
</feature>
<feature type="strand" evidence="17">
    <location>
        <begin position="279"/>
        <end position="281"/>
    </location>
</feature>
<feature type="strand" evidence="17">
    <location>
        <begin position="286"/>
        <end position="288"/>
    </location>
</feature>
<feature type="strand" evidence="17">
    <location>
        <begin position="298"/>
        <end position="302"/>
    </location>
</feature>
<feature type="strand" evidence="17">
    <location>
        <begin position="314"/>
        <end position="321"/>
    </location>
</feature>
<feature type="strand" evidence="17">
    <location>
        <begin position="324"/>
        <end position="329"/>
    </location>
</feature>
<feature type="strand" evidence="17">
    <location>
        <begin position="336"/>
        <end position="343"/>
    </location>
</feature>
<feature type="strand" evidence="17">
    <location>
        <begin position="348"/>
        <end position="360"/>
    </location>
</feature>
<evidence type="ECO:0000250" key="1">
    <source>
        <dbReference type="UniProtKB" id="Q80ZD7"/>
    </source>
</evidence>
<evidence type="ECO:0000255" key="2"/>
<evidence type="ECO:0000255" key="3">
    <source>
        <dbReference type="PROSITE-ProRule" id="PRU00114"/>
    </source>
</evidence>
<evidence type="ECO:0000256" key="4">
    <source>
        <dbReference type="SAM" id="MobiDB-lite"/>
    </source>
</evidence>
<evidence type="ECO:0000269" key="5">
    <source>
    </source>
</evidence>
<evidence type="ECO:0000269" key="6">
    <source>
    </source>
</evidence>
<evidence type="ECO:0000269" key="7">
    <source>
    </source>
</evidence>
<evidence type="ECO:0000303" key="8">
    <source>
    </source>
</evidence>
<evidence type="ECO:0000303" key="9">
    <source>
    </source>
</evidence>
<evidence type="ECO:0000305" key="10"/>
<evidence type="ECO:0000312" key="11">
    <source>
        <dbReference type="EMBL" id="AAH10598.2"/>
    </source>
</evidence>
<evidence type="ECO:0000312" key="12">
    <source>
        <dbReference type="EMBL" id="AAO48949.1"/>
    </source>
</evidence>
<evidence type="ECO:0000312" key="13">
    <source>
        <dbReference type="EMBL" id="BAD12541.1"/>
    </source>
</evidence>
<evidence type="ECO:0000312" key="14">
    <source>
        <dbReference type="EMBL" id="BAD32396.1"/>
    </source>
</evidence>
<evidence type="ECO:0000312" key="15">
    <source>
        <dbReference type="MGI" id="MGI:2653612"/>
    </source>
</evidence>
<evidence type="ECO:0007744" key="16">
    <source>
    </source>
</evidence>
<evidence type="ECO:0007829" key="17">
    <source>
        <dbReference type="PDB" id="2XOT"/>
    </source>
</evidence>
<organism>
    <name type="scientific">Mus musculus</name>
    <name type="common">Mouse</name>
    <dbReference type="NCBI Taxonomy" id="10090"/>
    <lineage>
        <taxon>Eukaryota</taxon>
        <taxon>Metazoa</taxon>
        <taxon>Chordata</taxon>
        <taxon>Craniata</taxon>
        <taxon>Vertebrata</taxon>
        <taxon>Euteleostomi</taxon>
        <taxon>Mammalia</taxon>
        <taxon>Eutheria</taxon>
        <taxon>Euarchontoglires</taxon>
        <taxon>Glires</taxon>
        <taxon>Rodentia</taxon>
        <taxon>Myomorpha</taxon>
        <taxon>Muroidea</taxon>
        <taxon>Muridae</taxon>
        <taxon>Murinae</taxon>
        <taxon>Mus</taxon>
        <taxon>Mus</taxon>
    </lineage>
</organism>
<keyword id="KW-0002">3D-structure</keyword>
<keyword id="KW-0025">Alternative splicing</keyword>
<keyword id="KW-0130">Cell adhesion</keyword>
<keyword id="KW-1003">Cell membrane</keyword>
<keyword id="KW-0966">Cell projection</keyword>
<keyword id="KW-0217">Developmental protein</keyword>
<keyword id="KW-0221">Differentiation</keyword>
<keyword id="KW-1015">Disulfide bond</keyword>
<keyword id="KW-0325">Glycoprotein</keyword>
<keyword id="KW-0393">Immunoglobulin domain</keyword>
<keyword id="KW-0433">Leucine-rich repeat</keyword>
<keyword id="KW-0472">Membrane</keyword>
<keyword id="KW-0524">Neurogenesis</keyword>
<keyword id="KW-0597">Phosphoprotein</keyword>
<keyword id="KW-1185">Reference proteome</keyword>
<keyword id="KW-0677">Repeat</keyword>
<keyword id="KW-0732">Signal</keyword>
<keyword id="KW-0812">Transmembrane</keyword>
<keyword id="KW-1133">Transmembrane helix</keyword>
<name>AMGO1_MOUSE</name>